<sequence>MKQPSLDELEKRAGSKYALAVLAAKRARMLTESQFAAQYPKGTKPVTIALMEIAAGKIKYEWGKKKA</sequence>
<comment type="function">
    <text evidence="1">Promotes RNA polymerase assembly. Latches the N- and C-terminal regions of the beta' subunit thereby facilitating its interaction with the beta and alpha subunits.</text>
</comment>
<comment type="catalytic activity">
    <reaction evidence="1">
        <text>RNA(n) + a ribonucleoside 5'-triphosphate = RNA(n+1) + diphosphate</text>
        <dbReference type="Rhea" id="RHEA:21248"/>
        <dbReference type="Rhea" id="RHEA-COMP:14527"/>
        <dbReference type="Rhea" id="RHEA-COMP:17342"/>
        <dbReference type="ChEBI" id="CHEBI:33019"/>
        <dbReference type="ChEBI" id="CHEBI:61557"/>
        <dbReference type="ChEBI" id="CHEBI:140395"/>
        <dbReference type="EC" id="2.7.7.6"/>
    </reaction>
</comment>
<comment type="subunit">
    <text evidence="1">The RNAP catalytic core consists of 2 alpha, 1 beta, 1 beta' and 1 omega subunit. When a sigma factor is associated with the core the holoenzyme is formed, which can initiate transcription.</text>
</comment>
<comment type="similarity">
    <text evidence="1">Belongs to the RNA polymerase subunit omega family.</text>
</comment>
<name>RPOZ_MOOTA</name>
<dbReference type="EC" id="2.7.7.6" evidence="1"/>
<dbReference type="EMBL" id="CP000232">
    <property type="protein sequence ID" value="ABC19209.1"/>
    <property type="molecule type" value="Genomic_DNA"/>
</dbReference>
<dbReference type="RefSeq" id="YP_429752.1">
    <property type="nucleotide sequence ID" value="NC_007644.1"/>
</dbReference>
<dbReference type="SMR" id="Q2RK30"/>
<dbReference type="STRING" id="264732.Moth_0892"/>
<dbReference type="EnsemblBacteria" id="ABC19209">
    <property type="protein sequence ID" value="ABC19209"/>
    <property type="gene ID" value="Moth_0892"/>
</dbReference>
<dbReference type="KEGG" id="mta:Moth_0892"/>
<dbReference type="PATRIC" id="fig|264732.11.peg.959"/>
<dbReference type="eggNOG" id="COG1758">
    <property type="taxonomic scope" value="Bacteria"/>
</dbReference>
<dbReference type="HOGENOM" id="CLU_125406_6_1_9"/>
<dbReference type="OrthoDB" id="9815459at2"/>
<dbReference type="GO" id="GO:0000428">
    <property type="term" value="C:DNA-directed RNA polymerase complex"/>
    <property type="evidence" value="ECO:0007669"/>
    <property type="project" value="UniProtKB-KW"/>
</dbReference>
<dbReference type="GO" id="GO:0003677">
    <property type="term" value="F:DNA binding"/>
    <property type="evidence" value="ECO:0007669"/>
    <property type="project" value="UniProtKB-UniRule"/>
</dbReference>
<dbReference type="GO" id="GO:0003899">
    <property type="term" value="F:DNA-directed RNA polymerase activity"/>
    <property type="evidence" value="ECO:0007669"/>
    <property type="project" value="UniProtKB-UniRule"/>
</dbReference>
<dbReference type="GO" id="GO:0006351">
    <property type="term" value="P:DNA-templated transcription"/>
    <property type="evidence" value="ECO:0007669"/>
    <property type="project" value="UniProtKB-UniRule"/>
</dbReference>
<dbReference type="Gene3D" id="3.90.940.10">
    <property type="match status" value="1"/>
</dbReference>
<dbReference type="HAMAP" id="MF_00366">
    <property type="entry name" value="RNApol_bact_RpoZ"/>
    <property type="match status" value="1"/>
</dbReference>
<dbReference type="InterPro" id="IPR003716">
    <property type="entry name" value="DNA-dir_RNA_pol_omega"/>
</dbReference>
<dbReference type="InterPro" id="IPR006110">
    <property type="entry name" value="Pol_omega/Rpo6/RPB6"/>
</dbReference>
<dbReference type="InterPro" id="IPR036161">
    <property type="entry name" value="RPB6/omega-like_sf"/>
</dbReference>
<dbReference type="NCBIfam" id="TIGR00690">
    <property type="entry name" value="rpoZ"/>
    <property type="match status" value="1"/>
</dbReference>
<dbReference type="PANTHER" id="PTHR34476">
    <property type="entry name" value="DNA-DIRECTED RNA POLYMERASE SUBUNIT OMEGA"/>
    <property type="match status" value="1"/>
</dbReference>
<dbReference type="PANTHER" id="PTHR34476:SF1">
    <property type="entry name" value="DNA-DIRECTED RNA POLYMERASE SUBUNIT OMEGA"/>
    <property type="match status" value="1"/>
</dbReference>
<dbReference type="Pfam" id="PF01192">
    <property type="entry name" value="RNA_pol_Rpb6"/>
    <property type="match status" value="1"/>
</dbReference>
<dbReference type="SMART" id="SM01409">
    <property type="entry name" value="RNA_pol_Rpb6"/>
    <property type="match status" value="1"/>
</dbReference>
<dbReference type="SUPFAM" id="SSF63562">
    <property type="entry name" value="RPB6/omega subunit-like"/>
    <property type="match status" value="1"/>
</dbReference>
<gene>
    <name evidence="1" type="primary">rpoZ</name>
    <name type="ordered locus">Moth_0892</name>
</gene>
<organism>
    <name type="scientific">Moorella thermoacetica (strain ATCC 39073 / JCM 9320)</name>
    <dbReference type="NCBI Taxonomy" id="264732"/>
    <lineage>
        <taxon>Bacteria</taxon>
        <taxon>Bacillati</taxon>
        <taxon>Bacillota</taxon>
        <taxon>Clostridia</taxon>
        <taxon>Moorellales</taxon>
        <taxon>Moorellaceae</taxon>
        <taxon>Moorella</taxon>
    </lineage>
</organism>
<evidence type="ECO:0000255" key="1">
    <source>
        <dbReference type="HAMAP-Rule" id="MF_00366"/>
    </source>
</evidence>
<proteinExistence type="inferred from homology"/>
<feature type="chain" id="PRO_0000237475" description="DNA-directed RNA polymerase subunit omega">
    <location>
        <begin position="1"/>
        <end position="67"/>
    </location>
</feature>
<accession>Q2RK30</accession>
<protein>
    <recommendedName>
        <fullName evidence="1">DNA-directed RNA polymerase subunit omega</fullName>
        <shortName evidence="1">RNAP omega subunit</shortName>
        <ecNumber evidence="1">2.7.7.6</ecNumber>
    </recommendedName>
    <alternativeName>
        <fullName evidence="1">RNA polymerase omega subunit</fullName>
    </alternativeName>
    <alternativeName>
        <fullName evidence="1">Transcriptase subunit omega</fullName>
    </alternativeName>
</protein>
<keyword id="KW-0240">DNA-directed RNA polymerase</keyword>
<keyword id="KW-0548">Nucleotidyltransferase</keyword>
<keyword id="KW-0804">Transcription</keyword>
<keyword id="KW-0808">Transferase</keyword>
<reference key="1">
    <citation type="journal article" date="2008" name="Environ. Microbiol.">
        <title>The complete genome sequence of Moorella thermoacetica (f. Clostridium thermoaceticum).</title>
        <authorList>
            <person name="Pierce E."/>
            <person name="Xie G."/>
            <person name="Barabote R.D."/>
            <person name="Saunders E."/>
            <person name="Han C.S."/>
            <person name="Detter J.C."/>
            <person name="Richardson P."/>
            <person name="Brettin T.S."/>
            <person name="Das A."/>
            <person name="Ljungdahl L.G."/>
            <person name="Ragsdale S.W."/>
        </authorList>
    </citation>
    <scope>NUCLEOTIDE SEQUENCE [LARGE SCALE GENOMIC DNA]</scope>
    <source>
        <strain>ATCC 39073 / JCM 9320</strain>
    </source>
</reference>